<feature type="signal peptide" description="Tat-type signal" evidence="1 4">
    <location>
        <begin position="1"/>
        <end position="42"/>
    </location>
</feature>
<feature type="chain" id="PRO_0000454140" description="Trichloroethene reductive dehalogenase" evidence="4">
    <location>
        <begin position="43"/>
        <end position="554"/>
    </location>
</feature>
<feature type="domain" description="4Fe-4S ferredoxin-type 1" evidence="2">
    <location>
        <begin position="425"/>
        <end position="457"/>
    </location>
</feature>
<feature type="domain" description="4Fe-4S ferredoxin-type 2" evidence="2">
    <location>
        <begin position="471"/>
        <end position="500"/>
    </location>
</feature>
<feature type="binding site" evidence="2">
    <location>
        <position position="437"/>
    </location>
    <ligand>
        <name>[4Fe-4S] cluster</name>
        <dbReference type="ChEBI" id="CHEBI:49883"/>
        <label>1</label>
    </ligand>
</feature>
<feature type="binding site" evidence="2">
    <location>
        <position position="440"/>
    </location>
    <ligand>
        <name>[4Fe-4S] cluster</name>
        <dbReference type="ChEBI" id="CHEBI:49883"/>
        <label>1</label>
    </ligand>
</feature>
<feature type="binding site" evidence="2">
    <location>
        <position position="443"/>
    </location>
    <ligand>
        <name>[4Fe-4S] cluster</name>
        <dbReference type="ChEBI" id="CHEBI:49883"/>
        <label>1</label>
    </ligand>
</feature>
<feature type="binding site" evidence="2">
    <location>
        <position position="447"/>
    </location>
    <ligand>
        <name>[4Fe-4S] cluster</name>
        <dbReference type="ChEBI" id="CHEBI:49883"/>
        <label>2</label>
    </ligand>
</feature>
<feature type="binding site" evidence="2">
    <location>
        <position position="480"/>
    </location>
    <ligand>
        <name>[4Fe-4S] cluster</name>
        <dbReference type="ChEBI" id="CHEBI:49883"/>
        <label>2</label>
    </ligand>
</feature>
<feature type="binding site" evidence="2">
    <location>
        <position position="483"/>
    </location>
    <ligand>
        <name>[4Fe-4S] cluster</name>
        <dbReference type="ChEBI" id="CHEBI:49883"/>
        <label>2</label>
    </ligand>
</feature>
<feature type="binding site" evidence="2">
    <location>
        <position position="486"/>
    </location>
    <ligand>
        <name>[4Fe-4S] cluster</name>
        <dbReference type="ChEBI" id="CHEBI:49883"/>
        <label>2</label>
    </ligand>
</feature>
<feature type="binding site" evidence="2">
    <location>
        <position position="490"/>
    </location>
    <ligand>
        <name>[4Fe-4S] cluster</name>
        <dbReference type="ChEBI" id="CHEBI:49883"/>
        <label>1</label>
    </ligand>
</feature>
<feature type="sequence conflict" description="In Ref. 1; AAF73916." evidence="7" ref="1">
    <original>V</original>
    <variation>A</variation>
    <location>
        <position position="261"/>
    </location>
</feature>
<keyword id="KW-0004">4Fe-4S</keyword>
<keyword id="KW-1003">Cell membrane</keyword>
<keyword id="KW-0903">Direct protein sequencing</keyword>
<keyword id="KW-0408">Iron</keyword>
<keyword id="KW-0411">Iron-sulfur</keyword>
<keyword id="KW-0472">Membrane</keyword>
<keyword id="KW-0479">Metal-binding</keyword>
<keyword id="KW-0560">Oxidoreductase</keyword>
<keyword id="KW-0677">Repeat</keyword>
<keyword id="KW-0732">Signal</keyword>
<name>TCEA_DEHM1</name>
<reference key="1">
    <citation type="journal article" date="2000" name="Appl. Environ. Microbiol.">
        <title>Trichloroethene reductive dehalogenase from Dehalococcoides ethenogenes: sequence of tceA and substrate range characterization.</title>
        <authorList>
            <person name="Magnuson J.K."/>
            <person name="Romine M.F."/>
            <person name="Burris D.R."/>
            <person name="Kingsley M.T."/>
        </authorList>
    </citation>
    <scope>NUCLEOTIDE SEQUENCE [GENOMIC DNA]</scope>
    <scope>PROTEIN SEQUENCE OF 43-69 AND 215-232</scope>
    <scope>FUNCTION</scope>
    <scope>CATALYTIC ACTIVITY</scope>
    <scope>SUBCELLULAR LOCATION</scope>
    <source>
        <strain>ATCC BAA-2266 / KCTC 15142 / 195</strain>
    </source>
</reference>
<reference key="2">
    <citation type="journal article" date="2005" name="Science">
        <title>Genome sequence of the PCE-dechlorinating bacterium Dehalococcoides ethenogenes.</title>
        <authorList>
            <person name="Seshadri R."/>
            <person name="Adrian L."/>
            <person name="Fouts D.E."/>
            <person name="Eisen J.A."/>
            <person name="Phillippy A.M."/>
            <person name="Methe B.A."/>
            <person name="Ward N.L."/>
            <person name="Nelson W.C."/>
            <person name="DeBoy R.T."/>
            <person name="Khouri H.M."/>
            <person name="Kolonay J.F."/>
            <person name="Dodson R.J."/>
            <person name="Daugherty S.C."/>
            <person name="Brinkac L.M."/>
            <person name="Sullivan S.A."/>
            <person name="Madupu R."/>
            <person name="Nelson K.E."/>
            <person name="Kang K.H."/>
            <person name="Impraim M."/>
            <person name="Tran K."/>
            <person name="Robinson J.M."/>
            <person name="Forberger H.A."/>
            <person name="Fraser C.M."/>
            <person name="Zinder S.H."/>
            <person name="Heidelberg J.F."/>
        </authorList>
    </citation>
    <scope>NUCLEOTIDE SEQUENCE [LARGE SCALE GENOMIC DNA]</scope>
    <source>
        <strain>ATCC BAA-2266 / KCTC 15142 / 195</strain>
    </source>
</reference>
<reference key="3">
    <citation type="journal article" date="1998" name="Appl. Environ. Microbiol.">
        <title>Reductive dechlorination of tetrachloroethene to ethene by a two-component enzyme pathway.</title>
        <authorList>
            <person name="Magnuson J.K."/>
            <person name="Stern R.V."/>
            <person name="Gossett J.M."/>
            <person name="Zinder S.H."/>
            <person name="Burris D.R."/>
        </authorList>
    </citation>
    <scope>FUNCTION</scope>
    <scope>CATALYTIC ACTIVITY</scope>
    <scope>COFACTOR</scope>
    <scope>ACTIVITY REGULATION</scope>
    <scope>SUBCELLULAR LOCATION</scope>
    <source>
        <strain>ATCC BAA-2266 / KCTC 15142 / 195</strain>
    </source>
</reference>
<evidence type="ECO:0000255" key="1">
    <source>
        <dbReference type="PROSITE-ProRule" id="PRU00648"/>
    </source>
</evidence>
<evidence type="ECO:0000255" key="2">
    <source>
        <dbReference type="PROSITE-ProRule" id="PRU00711"/>
    </source>
</evidence>
<evidence type="ECO:0000269" key="3">
    <source>
    </source>
</evidence>
<evidence type="ECO:0000269" key="4">
    <source>
    </source>
</evidence>
<evidence type="ECO:0000303" key="5">
    <source>
    </source>
</evidence>
<evidence type="ECO:0000303" key="6">
    <source>
    </source>
</evidence>
<evidence type="ECO:0000305" key="7"/>
<evidence type="ECO:0000305" key="8">
    <source>
    </source>
</evidence>
<evidence type="ECO:0000312" key="9">
    <source>
        <dbReference type="EMBL" id="AAW39060.1"/>
    </source>
</evidence>
<comment type="function">
    <text evidence="3 4">Catalyzes the reductive dechlorination of trichloroethene (TCE) to cis-1,2-dichloroethene (DCE) and of cis-1,2-dichloroethene to chloroethene (PubMed:10671186, PubMed:11097881). The substrate specificity is broad, and the enzyme can dehalogenate various substrates, including 1,1-dichloroethene (1,1-DCE), 1,2-dichloroethane and 1,2-dibromoethane (PubMed:10671186, PubMed:11097881). A variety of other haloalkanes and haloalkenes containing three to five carbon atoms are dehalogenated at lower rates (PubMed:11097881). Trans-1,2-dichloroethene (trans-DCE) and chloroethene are degraded at rates which are approximately 2 orders of magnitude lower (PubMed:10671186, PubMed:11097881). Titanium(III) citrate and methyl viologen can be used as reductants (PubMed:10671186, PubMed:11097881).</text>
</comment>
<comment type="catalytic activity">
    <reaction evidence="3 4">
        <text>trichloroethene + AH2 = (Z)-1,2-dichloroethene + chloride + A + H(+)</text>
        <dbReference type="Rhea" id="RHEA:67992"/>
        <dbReference type="ChEBI" id="CHEBI:13193"/>
        <dbReference type="ChEBI" id="CHEBI:15378"/>
        <dbReference type="ChEBI" id="CHEBI:16602"/>
        <dbReference type="ChEBI" id="CHEBI:17499"/>
        <dbReference type="ChEBI" id="CHEBI:17996"/>
        <dbReference type="ChEBI" id="CHEBI:28805"/>
    </reaction>
    <physiologicalReaction direction="left-to-right" evidence="3 4">
        <dbReference type="Rhea" id="RHEA:67993"/>
    </physiologicalReaction>
</comment>
<comment type="catalytic activity">
    <reaction evidence="3 4">
        <text>(Z)-1,2-dichloroethene + AH2 = chloroethene + chloride + A + H(+)</text>
        <dbReference type="Rhea" id="RHEA:67996"/>
        <dbReference type="ChEBI" id="CHEBI:13193"/>
        <dbReference type="ChEBI" id="CHEBI:15378"/>
        <dbReference type="ChEBI" id="CHEBI:17499"/>
        <dbReference type="ChEBI" id="CHEBI:17996"/>
        <dbReference type="ChEBI" id="CHEBI:28509"/>
        <dbReference type="ChEBI" id="CHEBI:28805"/>
    </reaction>
    <physiologicalReaction direction="left-to-right" evidence="3 4">
        <dbReference type="Rhea" id="RHEA:67997"/>
    </physiologicalReaction>
</comment>
<comment type="catalytic activity">
    <reaction evidence="3 4">
        <text>1,1-dichloroethene + AH2 = chloroethene + chloride + A + H(+)</text>
        <dbReference type="Rhea" id="RHEA:68000"/>
        <dbReference type="ChEBI" id="CHEBI:13193"/>
        <dbReference type="ChEBI" id="CHEBI:15378"/>
        <dbReference type="ChEBI" id="CHEBI:17499"/>
        <dbReference type="ChEBI" id="CHEBI:17996"/>
        <dbReference type="ChEBI" id="CHEBI:28509"/>
        <dbReference type="ChEBI" id="CHEBI:34031"/>
    </reaction>
    <physiologicalReaction direction="left-to-right" evidence="3 4">
        <dbReference type="Rhea" id="RHEA:68001"/>
    </physiologicalReaction>
</comment>
<comment type="cofactor">
    <cofactor evidence="2">
        <name>[4Fe-4S] cluster</name>
        <dbReference type="ChEBI" id="CHEBI:49883"/>
    </cofactor>
    <text evidence="2">Binds 2 [4Fe-4S] clusters.</text>
</comment>
<comment type="cofactor">
    <cofactor evidence="3">
        <name>corrinoid</name>
        <dbReference type="ChEBI" id="CHEBI:33913"/>
    </cofactor>
</comment>
<comment type="activity regulation">
    <text evidence="3">Loses 93% of its activity upon incubation with 1-iodopropane and titanium(III) citrate in the dark. Subsequent exposure to light restores 80% of the original activity (PubMed:10671186). Completely inhibited by 2 mM sodium sulfite or sodium dithionite, and by 1 mM cuprous chloride (PubMed:10671186).</text>
</comment>
<comment type="subcellular location">
    <subcellularLocation>
        <location evidence="3 4">Cell membrane</location>
        <topology evidence="4">Peripheral membrane protein</topology>
        <orientation evidence="8">Extracellular side</orientation>
    </subcellularLocation>
    <text evidence="3">Membrane-bound.</text>
</comment>
<comment type="PTM">
    <text evidence="1 4">Predicted to be exported by the Tat system. The position of the signal peptide cleavage has been experimentally proven.</text>
</comment>
<comment type="similarity">
    <text evidence="7">Belongs to the PceA family.</text>
</comment>
<protein>
    <recommendedName>
        <fullName evidence="5">Trichloroethene reductive dehalogenase</fullName>
        <shortName evidence="5">TCE-RDase</shortName>
        <shortName evidence="5">TCE-reductive dehalogenase</shortName>
        <ecNumber evidence="3 4">1.21.99.-</ecNumber>
    </recommendedName>
</protein>
<proteinExistence type="evidence at protein level"/>
<dbReference type="EC" id="1.21.99.-" evidence="3 4"/>
<dbReference type="EMBL" id="AF228507">
    <property type="protein sequence ID" value="AAF73916.1"/>
    <property type="molecule type" value="Genomic_DNA"/>
</dbReference>
<dbReference type="EMBL" id="CP000027">
    <property type="protein sequence ID" value="AAW39060.1"/>
    <property type="molecule type" value="Genomic_DNA"/>
</dbReference>
<dbReference type="RefSeq" id="WP_010935886.1">
    <property type="nucleotide sequence ID" value="NC_002936.3"/>
</dbReference>
<dbReference type="SMR" id="Q3ZAB8"/>
<dbReference type="STRING" id="243164.DET0079"/>
<dbReference type="GeneID" id="3229017"/>
<dbReference type="KEGG" id="det:DET0079"/>
<dbReference type="PATRIC" id="fig|243164.10.peg.72"/>
<dbReference type="eggNOG" id="COG2768">
    <property type="taxonomic scope" value="Bacteria"/>
</dbReference>
<dbReference type="HOGENOM" id="CLU_036586_0_1_0"/>
<dbReference type="InParanoid" id="Q3ZAB8"/>
<dbReference type="Proteomes" id="UP000008289">
    <property type="component" value="Chromosome"/>
</dbReference>
<dbReference type="GO" id="GO:0005886">
    <property type="term" value="C:plasma membrane"/>
    <property type="evidence" value="ECO:0007669"/>
    <property type="project" value="UniProtKB-SubCell"/>
</dbReference>
<dbReference type="GO" id="GO:0051539">
    <property type="term" value="F:4 iron, 4 sulfur cluster binding"/>
    <property type="evidence" value="ECO:0007669"/>
    <property type="project" value="UniProtKB-KW"/>
</dbReference>
<dbReference type="GO" id="GO:0046872">
    <property type="term" value="F:metal ion binding"/>
    <property type="evidence" value="ECO:0007669"/>
    <property type="project" value="UniProtKB-KW"/>
</dbReference>
<dbReference type="GO" id="GO:0016491">
    <property type="term" value="F:oxidoreductase activity"/>
    <property type="evidence" value="ECO:0007669"/>
    <property type="project" value="UniProtKB-KW"/>
</dbReference>
<dbReference type="Gene3D" id="3.30.70.20">
    <property type="match status" value="1"/>
</dbReference>
<dbReference type="InterPro" id="IPR017896">
    <property type="entry name" value="4Fe4S_Fe-S-bd"/>
</dbReference>
<dbReference type="InterPro" id="IPR017900">
    <property type="entry name" value="4Fe4S_Fe_S_CS"/>
</dbReference>
<dbReference type="InterPro" id="IPR012832">
    <property type="entry name" value="RDH"/>
</dbReference>
<dbReference type="InterPro" id="IPR028894">
    <property type="entry name" value="RDH_dom"/>
</dbReference>
<dbReference type="InterPro" id="IPR006311">
    <property type="entry name" value="TAT_signal"/>
</dbReference>
<dbReference type="InterPro" id="IPR019546">
    <property type="entry name" value="TAT_signal_bac_arc"/>
</dbReference>
<dbReference type="NCBIfam" id="TIGR02486">
    <property type="entry name" value="RDH"/>
    <property type="match status" value="1"/>
</dbReference>
<dbReference type="NCBIfam" id="TIGR01409">
    <property type="entry name" value="TAT_signal_seq"/>
    <property type="match status" value="1"/>
</dbReference>
<dbReference type="PANTHER" id="PTHR42827:SF1">
    <property type="entry name" value="IRON-SULFUR CLUSTER-BINDING PROTEIN"/>
    <property type="match status" value="1"/>
</dbReference>
<dbReference type="PANTHER" id="PTHR42827">
    <property type="entry name" value="IRON-SULFUR CLUSTER-BINDING PROTEIN-RELATED"/>
    <property type="match status" value="1"/>
</dbReference>
<dbReference type="Pfam" id="PF13486">
    <property type="entry name" value="Dehalogenase"/>
    <property type="match status" value="1"/>
</dbReference>
<dbReference type="Pfam" id="PF12838">
    <property type="entry name" value="Fer4_7"/>
    <property type="match status" value="1"/>
</dbReference>
<dbReference type="SUPFAM" id="SSF54862">
    <property type="entry name" value="4Fe-4S ferredoxins"/>
    <property type="match status" value="1"/>
</dbReference>
<dbReference type="PROSITE" id="PS00198">
    <property type="entry name" value="4FE4S_FER_1"/>
    <property type="match status" value="2"/>
</dbReference>
<dbReference type="PROSITE" id="PS51379">
    <property type="entry name" value="4FE4S_FER_2"/>
    <property type="match status" value="2"/>
</dbReference>
<dbReference type="PROSITE" id="PS51318">
    <property type="entry name" value="TAT"/>
    <property type="match status" value="1"/>
</dbReference>
<accession>Q3ZAB8</accession>
<accession>Q9KIP5</accession>
<organism>
    <name type="scientific">Dehalococcoides mccartyi (strain ATCC BAA-2266 / KCTC 15142 / 195)</name>
    <name type="common">Dehalococcoides ethenogenes (strain 195)</name>
    <dbReference type="NCBI Taxonomy" id="243164"/>
    <lineage>
        <taxon>Bacteria</taxon>
        <taxon>Bacillati</taxon>
        <taxon>Chloroflexota</taxon>
        <taxon>Dehalococcoidia</taxon>
        <taxon>Dehalococcoidales</taxon>
        <taxon>Dehalococcoidaceae</taxon>
        <taxon>Dehalococcoides</taxon>
    </lineage>
</organism>
<gene>
    <name evidence="6" type="primary">tceA</name>
    <name evidence="9" type="ordered locus">DET0079</name>
</gene>
<sequence>MSEKYHSTVTRRDFMKRLGLAGAGAGALGAAVLAENNLPHEFKDVDDLLSAGKALEGDHANKVNNHPWWVTTRDHEDPTCNIDWSLIKRYSGWNNQGAYFLPEDYLSPTYTGRRHTIVDSKLEIELQGKKYRDSAFIKSGIDWMKENIDPDYDPGELGYGDRREDALIYAATNGSHNCWENPLYGRYEGSRPYLSMRTMNGINGLHEFGHADIKTTNYPKWEGTPEENLLIMRTAARYFGASSVGAIKITDNVKKIFYAKVQPFCLGPWYTITNMAEYIEYPVPVDNYAIPIVFEDIPADQGHYSYKRFGGDDKIAVPNALDNIFTYTIMLPEKRFKYAHSIPMDPCSCIAYPLFTEVEARIQQFIAGLGYNSMGGGVEAWGPGSAFGNLSGLGEQSRVSSIIEPRYGSNTKGSLRMLTDLPLAPTKPIDAGIREFCKTCGICAEHCPTQAISHEGPRYDSPHWDCVSGYEGWHLDYHKCINCTICEAVCPFFTMSNNSWVHNLVKSTVATTPVFNGFFKNMEGAFGYGPRYSPSRDEWWASENPIRGASVDIF</sequence>